<keyword id="KW-1185">Reference proteome</keyword>
<keyword id="KW-0687">Ribonucleoprotein</keyword>
<keyword id="KW-0689">Ribosomal protein</keyword>
<keyword id="KW-0694">RNA-binding</keyword>
<keyword id="KW-0699">rRNA-binding</keyword>
<organism>
    <name type="scientific">Thiobacillus denitrificans (strain ATCC 25259 / T1)</name>
    <dbReference type="NCBI Taxonomy" id="292415"/>
    <lineage>
        <taxon>Bacteria</taxon>
        <taxon>Pseudomonadati</taxon>
        <taxon>Pseudomonadota</taxon>
        <taxon>Betaproteobacteria</taxon>
        <taxon>Nitrosomonadales</taxon>
        <taxon>Thiobacillaceae</taxon>
        <taxon>Thiobacillus</taxon>
    </lineage>
</organism>
<reference key="1">
    <citation type="journal article" date="2006" name="J. Bacteriol.">
        <title>The genome sequence of the obligately chemolithoautotrophic, facultatively anaerobic bacterium Thiobacillus denitrificans.</title>
        <authorList>
            <person name="Beller H.R."/>
            <person name="Chain P.S."/>
            <person name="Letain T.E."/>
            <person name="Chakicherla A."/>
            <person name="Larimer F.W."/>
            <person name="Richardson P.M."/>
            <person name="Coleman M.A."/>
            <person name="Wood A.P."/>
            <person name="Kelly D.P."/>
        </authorList>
    </citation>
    <scope>NUCLEOTIDE SEQUENCE [LARGE SCALE GENOMIC DNA]</scope>
    <source>
        <strain>ATCC 25259 / T1</strain>
    </source>
</reference>
<name>RL18_THIDA</name>
<comment type="function">
    <text evidence="1">This is one of the proteins that bind and probably mediate the attachment of the 5S RNA into the large ribosomal subunit, where it forms part of the central protuberance.</text>
</comment>
<comment type="subunit">
    <text evidence="1">Part of the 50S ribosomal subunit; part of the 5S rRNA/L5/L18/L25 subcomplex. Contacts the 5S and 23S rRNAs.</text>
</comment>
<comment type="similarity">
    <text evidence="1">Belongs to the universal ribosomal protein uL18 family.</text>
</comment>
<protein>
    <recommendedName>
        <fullName evidence="1">Large ribosomal subunit protein uL18</fullName>
    </recommendedName>
    <alternativeName>
        <fullName evidence="2">50S ribosomal protein L18</fullName>
    </alternativeName>
</protein>
<evidence type="ECO:0000255" key="1">
    <source>
        <dbReference type="HAMAP-Rule" id="MF_01337"/>
    </source>
</evidence>
<evidence type="ECO:0000305" key="2"/>
<proteinExistence type="inferred from homology"/>
<dbReference type="EMBL" id="CP000116">
    <property type="protein sequence ID" value="AAZ96374.1"/>
    <property type="molecule type" value="Genomic_DNA"/>
</dbReference>
<dbReference type="RefSeq" id="WP_011310933.1">
    <property type="nucleotide sequence ID" value="NC_007404.1"/>
</dbReference>
<dbReference type="SMR" id="Q3SLN3"/>
<dbReference type="STRING" id="292415.Tbd_0421"/>
<dbReference type="KEGG" id="tbd:Tbd_0421"/>
<dbReference type="eggNOG" id="COG0256">
    <property type="taxonomic scope" value="Bacteria"/>
</dbReference>
<dbReference type="HOGENOM" id="CLU_098841_0_1_4"/>
<dbReference type="OrthoDB" id="9810939at2"/>
<dbReference type="Proteomes" id="UP000008291">
    <property type="component" value="Chromosome"/>
</dbReference>
<dbReference type="GO" id="GO:0022625">
    <property type="term" value="C:cytosolic large ribosomal subunit"/>
    <property type="evidence" value="ECO:0007669"/>
    <property type="project" value="TreeGrafter"/>
</dbReference>
<dbReference type="GO" id="GO:0008097">
    <property type="term" value="F:5S rRNA binding"/>
    <property type="evidence" value="ECO:0007669"/>
    <property type="project" value="TreeGrafter"/>
</dbReference>
<dbReference type="GO" id="GO:0003735">
    <property type="term" value="F:structural constituent of ribosome"/>
    <property type="evidence" value="ECO:0007669"/>
    <property type="project" value="InterPro"/>
</dbReference>
<dbReference type="GO" id="GO:0006412">
    <property type="term" value="P:translation"/>
    <property type="evidence" value="ECO:0007669"/>
    <property type="project" value="UniProtKB-UniRule"/>
</dbReference>
<dbReference type="CDD" id="cd00432">
    <property type="entry name" value="Ribosomal_L18_L5e"/>
    <property type="match status" value="1"/>
</dbReference>
<dbReference type="FunFam" id="3.30.420.100:FF:000001">
    <property type="entry name" value="50S ribosomal protein L18"/>
    <property type="match status" value="1"/>
</dbReference>
<dbReference type="Gene3D" id="3.30.420.100">
    <property type="match status" value="1"/>
</dbReference>
<dbReference type="HAMAP" id="MF_01337_B">
    <property type="entry name" value="Ribosomal_uL18_B"/>
    <property type="match status" value="1"/>
</dbReference>
<dbReference type="InterPro" id="IPR004389">
    <property type="entry name" value="Ribosomal_uL18_bac-type"/>
</dbReference>
<dbReference type="InterPro" id="IPR005484">
    <property type="entry name" value="Ribosomal_uL18_bac/euk"/>
</dbReference>
<dbReference type="NCBIfam" id="TIGR00060">
    <property type="entry name" value="L18_bact"/>
    <property type="match status" value="1"/>
</dbReference>
<dbReference type="PANTHER" id="PTHR12899">
    <property type="entry name" value="39S RIBOSOMAL PROTEIN L18, MITOCHONDRIAL"/>
    <property type="match status" value="1"/>
</dbReference>
<dbReference type="PANTHER" id="PTHR12899:SF3">
    <property type="entry name" value="LARGE RIBOSOMAL SUBUNIT PROTEIN UL18M"/>
    <property type="match status" value="1"/>
</dbReference>
<dbReference type="Pfam" id="PF00861">
    <property type="entry name" value="Ribosomal_L18p"/>
    <property type="match status" value="1"/>
</dbReference>
<dbReference type="SUPFAM" id="SSF53137">
    <property type="entry name" value="Translational machinery components"/>
    <property type="match status" value="1"/>
</dbReference>
<feature type="chain" id="PRO_0000251389" description="Large ribosomal subunit protein uL18">
    <location>
        <begin position="1"/>
        <end position="117"/>
    </location>
</feature>
<sequence>MNTKQSRIRRARKTRAKIAAVKAIRLAIHRTNSHIYAQIISADGGTVMASASSNDKDLRGQLANGGTTAAAAAVGKRLAEKAKGLGIEKVAFDRAGFKFHGRVKALAEAAREGGLAF</sequence>
<accession>Q3SLN3</accession>
<gene>
    <name evidence="1" type="primary">rplR</name>
    <name type="ordered locus">Tbd_0421</name>
</gene>